<feature type="chain" id="PRO_0000303608" description="tRNA N6-adenosine threonylcarbamoyltransferase">
    <location>
        <begin position="1"/>
        <end position="338"/>
    </location>
</feature>
<feature type="binding site" evidence="1">
    <location>
        <position position="111"/>
    </location>
    <ligand>
        <name>Fe cation</name>
        <dbReference type="ChEBI" id="CHEBI:24875"/>
    </ligand>
</feature>
<feature type="binding site" evidence="1">
    <location>
        <position position="115"/>
    </location>
    <ligand>
        <name>Fe cation</name>
        <dbReference type="ChEBI" id="CHEBI:24875"/>
    </ligand>
</feature>
<feature type="binding site" evidence="1">
    <location>
        <begin position="134"/>
        <end position="138"/>
    </location>
    <ligand>
        <name>substrate</name>
    </ligand>
</feature>
<feature type="binding site" evidence="1">
    <location>
        <position position="167"/>
    </location>
    <ligand>
        <name>substrate</name>
    </ligand>
</feature>
<feature type="binding site" evidence="1">
    <location>
        <position position="180"/>
    </location>
    <ligand>
        <name>substrate</name>
    </ligand>
</feature>
<feature type="binding site" evidence="1">
    <location>
        <position position="272"/>
    </location>
    <ligand>
        <name>substrate</name>
    </ligand>
</feature>
<feature type="binding site" evidence="1">
    <location>
        <position position="300"/>
    </location>
    <ligand>
        <name>Fe cation</name>
        <dbReference type="ChEBI" id="CHEBI:24875"/>
    </ligand>
</feature>
<protein>
    <recommendedName>
        <fullName evidence="1">tRNA N6-adenosine threonylcarbamoyltransferase</fullName>
        <ecNumber evidence="1">2.3.1.234</ecNumber>
    </recommendedName>
    <alternativeName>
        <fullName evidence="1">N6-L-threonylcarbamoyladenine synthase</fullName>
        <shortName evidence="1">t(6)A synthase</shortName>
    </alternativeName>
    <alternativeName>
        <fullName evidence="1">t(6)A37 threonylcarbamoyladenosine biosynthesis protein TsaD</fullName>
    </alternativeName>
    <alternativeName>
        <fullName evidence="1">tRNA threonylcarbamoyladenosine biosynthesis protein TsaD</fullName>
    </alternativeName>
</protein>
<keyword id="KW-0012">Acyltransferase</keyword>
<keyword id="KW-0963">Cytoplasm</keyword>
<keyword id="KW-0408">Iron</keyword>
<keyword id="KW-0479">Metal-binding</keyword>
<keyword id="KW-0808">Transferase</keyword>
<keyword id="KW-0819">tRNA processing</keyword>
<name>TSAD_VIBPA</name>
<evidence type="ECO:0000255" key="1">
    <source>
        <dbReference type="HAMAP-Rule" id="MF_01445"/>
    </source>
</evidence>
<comment type="function">
    <text evidence="1">Required for the formation of a threonylcarbamoyl group on adenosine at position 37 (t(6)A37) in tRNAs that read codons beginning with adenine. Is involved in the transfer of the threonylcarbamoyl moiety of threonylcarbamoyl-AMP (TC-AMP) to the N6 group of A37, together with TsaE and TsaB. TsaD likely plays a direct catalytic role in this reaction.</text>
</comment>
<comment type="catalytic activity">
    <reaction evidence="1">
        <text>L-threonylcarbamoyladenylate + adenosine(37) in tRNA = N(6)-L-threonylcarbamoyladenosine(37) in tRNA + AMP + H(+)</text>
        <dbReference type="Rhea" id="RHEA:37059"/>
        <dbReference type="Rhea" id="RHEA-COMP:10162"/>
        <dbReference type="Rhea" id="RHEA-COMP:10163"/>
        <dbReference type="ChEBI" id="CHEBI:15378"/>
        <dbReference type="ChEBI" id="CHEBI:73682"/>
        <dbReference type="ChEBI" id="CHEBI:74411"/>
        <dbReference type="ChEBI" id="CHEBI:74418"/>
        <dbReference type="ChEBI" id="CHEBI:456215"/>
        <dbReference type="EC" id="2.3.1.234"/>
    </reaction>
</comment>
<comment type="cofactor">
    <cofactor evidence="1">
        <name>Fe(2+)</name>
        <dbReference type="ChEBI" id="CHEBI:29033"/>
    </cofactor>
    <text evidence="1">Binds 1 Fe(2+) ion per subunit.</text>
</comment>
<comment type="subcellular location">
    <subcellularLocation>
        <location evidence="1">Cytoplasm</location>
    </subcellularLocation>
</comment>
<comment type="similarity">
    <text evidence="1">Belongs to the KAE1 / TsaD family.</text>
</comment>
<organism>
    <name type="scientific">Vibrio parahaemolyticus serotype O3:K6 (strain RIMD 2210633)</name>
    <dbReference type="NCBI Taxonomy" id="223926"/>
    <lineage>
        <taxon>Bacteria</taxon>
        <taxon>Pseudomonadati</taxon>
        <taxon>Pseudomonadota</taxon>
        <taxon>Gammaproteobacteria</taxon>
        <taxon>Vibrionales</taxon>
        <taxon>Vibrionaceae</taxon>
        <taxon>Vibrio</taxon>
    </lineage>
</organism>
<proteinExistence type="inferred from homology"/>
<gene>
    <name evidence="1" type="primary">tsaD</name>
    <name type="synonym">gcp</name>
    <name type="ordered locus">VP0408</name>
</gene>
<sequence length="338" mass="36257">MRIIGIETSCDETGIAIYDDEKGLLAHKLYSQVKLHADYGGVVPELASRDHVKKTIPLIKEALKEANLTSQDIDGVAYTAGPGLVGALLVGATIGRSIAYAWGVPAVPVHHMEGHLLAPMLEDNPPPFPFVAVLVSGGHSMMVEVKGIGEYKILGESIDDAAGEAFDKTAKLMGLDYPGGPLLSKLAEKGTPGRFKFPRPMTNVPGLDMSFSGLKTFTANTIAANGDDEQTRADIAYAFEEAVCATLAIKCKRALEQTGMKRIVIAGGVSANRRLRAELEKLAKKIGGEVYYPRTEFCTDNGAMIAYAGMQRLKNGEVADMSVEARPRWPIDQLTPIA</sequence>
<reference key="1">
    <citation type="journal article" date="2003" name="Lancet">
        <title>Genome sequence of Vibrio parahaemolyticus: a pathogenic mechanism distinct from that of V. cholerae.</title>
        <authorList>
            <person name="Makino K."/>
            <person name="Oshima K."/>
            <person name="Kurokawa K."/>
            <person name="Yokoyama K."/>
            <person name="Uda T."/>
            <person name="Tagomori K."/>
            <person name="Iijima Y."/>
            <person name="Najima M."/>
            <person name="Nakano M."/>
            <person name="Yamashita A."/>
            <person name="Kubota Y."/>
            <person name="Kimura S."/>
            <person name="Yasunaga T."/>
            <person name="Honda T."/>
            <person name="Shinagawa H."/>
            <person name="Hattori M."/>
            <person name="Iida T."/>
        </authorList>
    </citation>
    <scope>NUCLEOTIDE SEQUENCE [LARGE SCALE GENOMIC DNA]</scope>
    <source>
        <strain>RIMD 2210633</strain>
    </source>
</reference>
<accession>Q87SL5</accession>
<dbReference type="EC" id="2.3.1.234" evidence="1"/>
<dbReference type="EMBL" id="BA000031">
    <property type="protein sequence ID" value="BAC58671.1"/>
    <property type="molecule type" value="Genomic_DNA"/>
</dbReference>
<dbReference type="RefSeq" id="NP_796787.1">
    <property type="nucleotide sequence ID" value="NC_004603.1"/>
</dbReference>
<dbReference type="RefSeq" id="WP_011105657.1">
    <property type="nucleotide sequence ID" value="NC_004603.1"/>
</dbReference>
<dbReference type="SMR" id="Q87SL5"/>
<dbReference type="GeneID" id="1187876"/>
<dbReference type="KEGG" id="vpa:VP0408"/>
<dbReference type="PATRIC" id="fig|223926.6.peg.387"/>
<dbReference type="eggNOG" id="COG0533">
    <property type="taxonomic scope" value="Bacteria"/>
</dbReference>
<dbReference type="HOGENOM" id="CLU_023208_0_0_6"/>
<dbReference type="Proteomes" id="UP000002493">
    <property type="component" value="Chromosome 1"/>
</dbReference>
<dbReference type="GO" id="GO:0005737">
    <property type="term" value="C:cytoplasm"/>
    <property type="evidence" value="ECO:0007669"/>
    <property type="project" value="UniProtKB-SubCell"/>
</dbReference>
<dbReference type="GO" id="GO:0005506">
    <property type="term" value="F:iron ion binding"/>
    <property type="evidence" value="ECO:0007669"/>
    <property type="project" value="UniProtKB-UniRule"/>
</dbReference>
<dbReference type="GO" id="GO:0061711">
    <property type="term" value="F:N(6)-L-threonylcarbamoyladenine synthase activity"/>
    <property type="evidence" value="ECO:0007669"/>
    <property type="project" value="UniProtKB-EC"/>
</dbReference>
<dbReference type="GO" id="GO:0002949">
    <property type="term" value="P:tRNA threonylcarbamoyladenosine modification"/>
    <property type="evidence" value="ECO:0007669"/>
    <property type="project" value="UniProtKB-UniRule"/>
</dbReference>
<dbReference type="CDD" id="cd24133">
    <property type="entry name" value="ASKHA_NBD_TsaD_bac"/>
    <property type="match status" value="1"/>
</dbReference>
<dbReference type="FunFam" id="3.30.420.40:FF:000031">
    <property type="entry name" value="tRNA N6-adenosine threonylcarbamoyltransferase"/>
    <property type="match status" value="1"/>
</dbReference>
<dbReference type="Gene3D" id="3.30.420.40">
    <property type="match status" value="2"/>
</dbReference>
<dbReference type="HAMAP" id="MF_01445">
    <property type="entry name" value="TsaD"/>
    <property type="match status" value="1"/>
</dbReference>
<dbReference type="InterPro" id="IPR043129">
    <property type="entry name" value="ATPase_NBD"/>
</dbReference>
<dbReference type="InterPro" id="IPR000905">
    <property type="entry name" value="Gcp-like_dom"/>
</dbReference>
<dbReference type="InterPro" id="IPR017861">
    <property type="entry name" value="KAE1/TsaD"/>
</dbReference>
<dbReference type="InterPro" id="IPR017860">
    <property type="entry name" value="Peptidase_M22_CS"/>
</dbReference>
<dbReference type="InterPro" id="IPR022450">
    <property type="entry name" value="TsaD"/>
</dbReference>
<dbReference type="NCBIfam" id="TIGR00329">
    <property type="entry name" value="gcp_kae1"/>
    <property type="match status" value="1"/>
</dbReference>
<dbReference type="NCBIfam" id="TIGR03723">
    <property type="entry name" value="T6A_TsaD_YgjD"/>
    <property type="match status" value="1"/>
</dbReference>
<dbReference type="PANTHER" id="PTHR11735">
    <property type="entry name" value="TRNA N6-ADENOSINE THREONYLCARBAMOYLTRANSFERASE"/>
    <property type="match status" value="1"/>
</dbReference>
<dbReference type="PANTHER" id="PTHR11735:SF6">
    <property type="entry name" value="TRNA N6-ADENOSINE THREONYLCARBAMOYLTRANSFERASE, MITOCHONDRIAL"/>
    <property type="match status" value="1"/>
</dbReference>
<dbReference type="Pfam" id="PF00814">
    <property type="entry name" value="TsaD"/>
    <property type="match status" value="1"/>
</dbReference>
<dbReference type="PRINTS" id="PR00789">
    <property type="entry name" value="OSIALOPTASE"/>
</dbReference>
<dbReference type="SUPFAM" id="SSF53067">
    <property type="entry name" value="Actin-like ATPase domain"/>
    <property type="match status" value="2"/>
</dbReference>
<dbReference type="PROSITE" id="PS01016">
    <property type="entry name" value="GLYCOPROTEASE"/>
    <property type="match status" value="1"/>
</dbReference>